<proteinExistence type="evidence at transcript level"/>
<comment type="function">
    <text evidence="2">Plays an essential role in heart function and development by regulating the organization and function of the sarcoplasmic reticulum in cardiomyocytes.</text>
</comment>
<comment type="subunit">
    <text evidence="2">Monomer (heart, ventricle). Homodimer (atria, kidney, intestine); maybe disulfide-linked. Homotrimer (heart, ventricle, skeletal muscle, liver). Interacts with ATL1. Interacts with ATL2. Interacts with ATL3. Interacts with CKAP4. Interacts with RTN4. Interacts with ZFYVE27.</text>
</comment>
<comment type="subcellular location">
    <subcellularLocation>
        <location evidence="2">Endoplasmic reticulum membrane</location>
        <topology evidence="3">Multi-pass membrane protein</topology>
    </subcellularLocation>
    <subcellularLocation>
        <location evidence="2">Sarcoplasmic reticulum membrane</location>
        <topology evidence="3">Multi-pass membrane protein</topology>
    </subcellularLocation>
    <text evidence="2">Localizes to endoplasmic reticulum tubular network. In cardiomyocytes, localizes to the junctional sarcoplasmic reticulum membrane which is closely tethered to the cell membrane and contractile machinery.</text>
</comment>
<comment type="domain">
    <text evidence="1">The short lumenal loops between transmembrane domains 1 and 2 and between transmembrane domains 3 and 4 may impart a wedge-like configuration, thus deforming membranes.</text>
</comment>
<comment type="similarity">
    <text evidence="4">Belongs to the DP1 family.</text>
</comment>
<sequence length="189" mass="21417">MSAAMRQRFDQFLHQKNCMTDLLAKTEAKTGVNRSFIALGVIGLLALYLVFGYGASLLCNLIGFGYPAYVSIKAIESPNKEDDTQWLTYWVVYGVFSIVEFFSDLFLSWFPFYYMLKCGFLLWCMAPSPANGADLLYKRIIRPFFLKHESQVDNVVNDLKDKAKETADTISKEARKAAVSLLGEEKKST</sequence>
<protein>
    <recommendedName>
        <fullName>Receptor expression-enhancing protein 5</fullName>
    </recommendedName>
</protein>
<accession>Q29RM3</accession>
<evidence type="ECO:0000250" key="1">
    <source>
        <dbReference type="UniProtKB" id="Q00765"/>
    </source>
</evidence>
<evidence type="ECO:0000250" key="2">
    <source>
        <dbReference type="UniProtKB" id="Q60870"/>
    </source>
</evidence>
<evidence type="ECO:0000255" key="3"/>
<evidence type="ECO:0000305" key="4"/>
<organism>
    <name type="scientific">Bos taurus</name>
    <name type="common">Bovine</name>
    <dbReference type="NCBI Taxonomy" id="9913"/>
    <lineage>
        <taxon>Eukaryota</taxon>
        <taxon>Metazoa</taxon>
        <taxon>Chordata</taxon>
        <taxon>Craniata</taxon>
        <taxon>Vertebrata</taxon>
        <taxon>Euteleostomi</taxon>
        <taxon>Mammalia</taxon>
        <taxon>Eutheria</taxon>
        <taxon>Laurasiatheria</taxon>
        <taxon>Artiodactyla</taxon>
        <taxon>Ruminantia</taxon>
        <taxon>Pecora</taxon>
        <taxon>Bovidae</taxon>
        <taxon>Bovinae</taxon>
        <taxon>Bos</taxon>
    </lineage>
</organism>
<name>REEP5_BOVIN</name>
<dbReference type="EMBL" id="BC114113">
    <property type="protein sequence ID" value="AAI14114.1"/>
    <property type="molecule type" value="mRNA"/>
</dbReference>
<dbReference type="RefSeq" id="NP_001040070.1">
    <property type="nucleotide sequence ID" value="NM_001046605.1"/>
</dbReference>
<dbReference type="SMR" id="Q29RM3"/>
<dbReference type="FunCoup" id="Q29RM3">
    <property type="interactions" value="1736"/>
</dbReference>
<dbReference type="STRING" id="9913.ENSBTAP00000056918"/>
<dbReference type="PaxDb" id="9913-ENSBTAP00000017009"/>
<dbReference type="PeptideAtlas" id="Q29RM3"/>
<dbReference type="GeneID" id="617543"/>
<dbReference type="KEGG" id="bta:617543"/>
<dbReference type="CTD" id="7905"/>
<dbReference type="eggNOG" id="KOG1725">
    <property type="taxonomic scope" value="Eukaryota"/>
</dbReference>
<dbReference type="InParanoid" id="Q29RM3"/>
<dbReference type="OrthoDB" id="10009287at2759"/>
<dbReference type="Proteomes" id="UP000009136">
    <property type="component" value="Unplaced"/>
</dbReference>
<dbReference type="GO" id="GO:0071782">
    <property type="term" value="C:endoplasmic reticulum tubular network"/>
    <property type="evidence" value="ECO:0000250"/>
    <property type="project" value="UniProtKB"/>
</dbReference>
<dbReference type="GO" id="GO:0033017">
    <property type="term" value="C:sarcoplasmic reticulum membrane"/>
    <property type="evidence" value="ECO:0007669"/>
    <property type="project" value="UniProtKB-SubCell"/>
</dbReference>
<dbReference type="GO" id="GO:0090158">
    <property type="term" value="P:endoplasmic reticulum membrane organization"/>
    <property type="evidence" value="ECO:0000250"/>
    <property type="project" value="UniProtKB"/>
</dbReference>
<dbReference type="InterPro" id="IPR004345">
    <property type="entry name" value="TB2_DP1_HVA22"/>
</dbReference>
<dbReference type="PANTHER" id="PTHR12300">
    <property type="entry name" value="HVA22-LIKE PROTEINS"/>
    <property type="match status" value="1"/>
</dbReference>
<dbReference type="PANTHER" id="PTHR12300:SF93">
    <property type="entry name" value="RECEPTOR EXPRESSION-ENHANCING PROTEIN 5"/>
    <property type="match status" value="1"/>
</dbReference>
<dbReference type="Pfam" id="PF03134">
    <property type="entry name" value="TB2_DP1_HVA22"/>
    <property type="match status" value="1"/>
</dbReference>
<keyword id="KW-0256">Endoplasmic reticulum</keyword>
<keyword id="KW-0472">Membrane</keyword>
<keyword id="KW-1185">Reference proteome</keyword>
<keyword id="KW-0703">Sarcoplasmic reticulum</keyword>
<keyword id="KW-0812">Transmembrane</keyword>
<keyword id="KW-1133">Transmembrane helix</keyword>
<reference key="1">
    <citation type="submission" date="2006-02" db="EMBL/GenBank/DDBJ databases">
        <authorList>
            <consortium name="NIH - Mammalian Gene Collection (MGC) project"/>
        </authorList>
    </citation>
    <scope>NUCLEOTIDE SEQUENCE [LARGE SCALE MRNA]</scope>
    <source>
        <strain>Hereford</strain>
        <tissue>Heart ventricle</tissue>
    </source>
</reference>
<gene>
    <name type="primary">REEP5</name>
</gene>
<feature type="chain" id="PRO_0000244383" description="Receptor expression-enhancing protein 5">
    <location>
        <begin position="1"/>
        <end position="189"/>
    </location>
</feature>
<feature type="topological domain" description="Cytoplasmic" evidence="1">
    <location>
        <begin position="1"/>
        <end position="34"/>
    </location>
</feature>
<feature type="transmembrane region" description="Helical" evidence="1">
    <location>
        <begin position="35"/>
        <end position="51"/>
    </location>
</feature>
<feature type="topological domain" description="Lumenal" evidence="1">
    <location>
        <begin position="52"/>
        <end position="53"/>
    </location>
</feature>
<feature type="transmembrane region" description="Helical" evidence="1">
    <location>
        <begin position="54"/>
        <end position="74"/>
    </location>
</feature>
<feature type="topological domain" description="Cytoplasmic" evidence="1">
    <location>
        <begin position="75"/>
        <end position="84"/>
    </location>
</feature>
<feature type="transmembrane region" description="Helical" evidence="1">
    <location>
        <begin position="85"/>
        <end position="103"/>
    </location>
</feature>
<feature type="topological domain" description="Lumenal" evidence="1">
    <location>
        <begin position="104"/>
        <end position="105"/>
    </location>
</feature>
<feature type="transmembrane region" description="Helical" evidence="1">
    <location>
        <begin position="106"/>
        <end position="123"/>
    </location>
</feature>
<feature type="topological domain" description="Cytoplasmic" evidence="1">
    <location>
        <begin position="124"/>
        <end position="189"/>
    </location>
</feature>
<feature type="region of interest" description="Required for dimerization and maintaining endoplasmic reticulum morphology" evidence="1">
    <location>
        <begin position="114"/>
        <end position="185"/>
    </location>
</feature>